<feature type="chain" id="PRO_0000334452" description="Na(+)/H(+) antiporter NhaA">
    <location>
        <begin position="1"/>
        <end position="414"/>
    </location>
</feature>
<feature type="transmembrane region" description="Helical" evidence="1">
    <location>
        <begin position="22"/>
        <end position="42"/>
    </location>
</feature>
<feature type="transmembrane region" description="Helical" evidence="1">
    <location>
        <begin position="61"/>
        <end position="81"/>
    </location>
</feature>
<feature type="transmembrane region" description="Helical" evidence="1">
    <location>
        <begin position="101"/>
        <end position="121"/>
    </location>
</feature>
<feature type="transmembrane region" description="Helical" evidence="1">
    <location>
        <begin position="131"/>
        <end position="151"/>
    </location>
</feature>
<feature type="transmembrane region" description="Helical" evidence="1">
    <location>
        <begin position="171"/>
        <end position="191"/>
    </location>
</feature>
<feature type="transmembrane region" description="Helical" evidence="1">
    <location>
        <begin position="215"/>
        <end position="235"/>
    </location>
</feature>
<feature type="transmembrane region" description="Helical" evidence="1">
    <location>
        <begin position="239"/>
        <end position="259"/>
    </location>
</feature>
<feature type="transmembrane region" description="Helical" evidence="1">
    <location>
        <begin position="281"/>
        <end position="301"/>
    </location>
</feature>
<feature type="transmembrane region" description="Helical" evidence="1">
    <location>
        <begin position="308"/>
        <end position="328"/>
    </location>
</feature>
<feature type="transmembrane region" description="Helical" evidence="1">
    <location>
        <begin position="343"/>
        <end position="363"/>
    </location>
</feature>
<feature type="transmembrane region" description="Helical" evidence="1">
    <location>
        <begin position="379"/>
        <end position="399"/>
    </location>
</feature>
<gene>
    <name evidence="1" type="primary">nhaA</name>
    <name type="ordered locus">Tfu_2301</name>
</gene>
<organism>
    <name type="scientific">Thermobifida fusca (strain YX)</name>
    <dbReference type="NCBI Taxonomy" id="269800"/>
    <lineage>
        <taxon>Bacteria</taxon>
        <taxon>Bacillati</taxon>
        <taxon>Actinomycetota</taxon>
        <taxon>Actinomycetes</taxon>
        <taxon>Streptosporangiales</taxon>
        <taxon>Nocardiopsidaceae</taxon>
        <taxon>Thermobifida</taxon>
    </lineage>
</organism>
<accession>Q47MI6</accession>
<comment type="function">
    <text evidence="1">Na(+)/H(+) antiporter that extrudes sodium in exchange for external protons.</text>
</comment>
<comment type="catalytic activity">
    <reaction evidence="1">
        <text>Na(+)(in) + 2 H(+)(out) = Na(+)(out) + 2 H(+)(in)</text>
        <dbReference type="Rhea" id="RHEA:29251"/>
        <dbReference type="ChEBI" id="CHEBI:15378"/>
        <dbReference type="ChEBI" id="CHEBI:29101"/>
    </reaction>
    <physiologicalReaction direction="left-to-right" evidence="1">
        <dbReference type="Rhea" id="RHEA:29252"/>
    </physiologicalReaction>
</comment>
<comment type="subcellular location">
    <subcellularLocation>
        <location evidence="1">Cell membrane</location>
        <topology evidence="1">Multi-pass membrane protein</topology>
    </subcellularLocation>
</comment>
<comment type="similarity">
    <text evidence="1">Belongs to the NhaA Na(+)/H(+) (TC 2.A.33) antiporter family.</text>
</comment>
<proteinExistence type="inferred from homology"/>
<reference key="1">
    <citation type="journal article" date="2007" name="J. Bacteriol.">
        <title>Genome sequence and analysis of the soil cellulolytic actinomycete Thermobifida fusca YX.</title>
        <authorList>
            <person name="Lykidis A."/>
            <person name="Mavromatis K."/>
            <person name="Ivanova N."/>
            <person name="Anderson I."/>
            <person name="Land M."/>
            <person name="DiBartolo G."/>
            <person name="Martinez M."/>
            <person name="Lapidus A."/>
            <person name="Lucas S."/>
            <person name="Copeland A."/>
            <person name="Richardson P."/>
            <person name="Wilson D.B."/>
            <person name="Kyrpides N."/>
        </authorList>
    </citation>
    <scope>NUCLEOTIDE SEQUENCE [LARGE SCALE GENOMIC DNA]</scope>
    <source>
        <strain>YX</strain>
    </source>
</reference>
<sequence length="414" mass="43140">MPTRPARSGLHSLAQLLRSDVVGGFLLIGGALTALIWANSPFGHVYEALRSFSFGPEALHLHLTVEAWVADGLLAIFFFVVGNELKQEFVHGELRNPRRAMLPIVAAVCGMAVPALIYAAFNAGDPARLPGWGIPMATDIAFAVAILAVVGRHLPSPLRTFLLTLAIVDDLGAIIVIAVFYTASLSFLPLIGAGMLLAVFGYLQRGRGVAARLNSAALPNWVVYLPLAGVIWALVHASGVHATIAGVAMGLLMRTVPLAGEKESPSHRLAHLLGPWSSGLVLPVFAVMSAGVVFAGGLGAVLDDTAALGIIAGLVVGKTVGIAGGSWVTTKLTAAELSPALRWIDITGMALLAGIGFTVSLLITDLSFPDYPEALVHAKAGVLLASLLATVLGAVVLAVRNAHYRKLRQAVSPQ</sequence>
<evidence type="ECO:0000255" key="1">
    <source>
        <dbReference type="HAMAP-Rule" id="MF_01844"/>
    </source>
</evidence>
<protein>
    <recommendedName>
        <fullName evidence="1">Na(+)/H(+) antiporter NhaA</fullName>
    </recommendedName>
    <alternativeName>
        <fullName evidence="1">Sodium/proton antiporter NhaA</fullName>
    </alternativeName>
</protein>
<name>NHAA_THEFY</name>
<keyword id="KW-0050">Antiport</keyword>
<keyword id="KW-1003">Cell membrane</keyword>
<keyword id="KW-0406">Ion transport</keyword>
<keyword id="KW-0472">Membrane</keyword>
<keyword id="KW-0915">Sodium</keyword>
<keyword id="KW-0739">Sodium transport</keyword>
<keyword id="KW-0812">Transmembrane</keyword>
<keyword id="KW-1133">Transmembrane helix</keyword>
<keyword id="KW-0813">Transport</keyword>
<dbReference type="EMBL" id="CP000088">
    <property type="protein sequence ID" value="AAZ56334.1"/>
    <property type="molecule type" value="Genomic_DNA"/>
</dbReference>
<dbReference type="RefSeq" id="WP_011292724.1">
    <property type="nucleotide sequence ID" value="NC_007333.1"/>
</dbReference>
<dbReference type="SMR" id="Q47MI6"/>
<dbReference type="STRING" id="269800.Tfu_2301"/>
<dbReference type="KEGG" id="tfu:Tfu_2301"/>
<dbReference type="eggNOG" id="COG3004">
    <property type="taxonomic scope" value="Bacteria"/>
</dbReference>
<dbReference type="HOGENOM" id="CLU_015803_0_0_11"/>
<dbReference type="OrthoDB" id="117402at2"/>
<dbReference type="GO" id="GO:0005886">
    <property type="term" value="C:plasma membrane"/>
    <property type="evidence" value="ECO:0007669"/>
    <property type="project" value="UniProtKB-SubCell"/>
</dbReference>
<dbReference type="GO" id="GO:0015385">
    <property type="term" value="F:sodium:proton antiporter activity"/>
    <property type="evidence" value="ECO:0007669"/>
    <property type="project" value="TreeGrafter"/>
</dbReference>
<dbReference type="GO" id="GO:0006885">
    <property type="term" value="P:regulation of pH"/>
    <property type="evidence" value="ECO:0007669"/>
    <property type="project" value="InterPro"/>
</dbReference>
<dbReference type="Gene3D" id="1.20.1530.10">
    <property type="entry name" value="Na+/H+ antiporter like domain"/>
    <property type="match status" value="1"/>
</dbReference>
<dbReference type="HAMAP" id="MF_01844">
    <property type="entry name" value="NhaA"/>
    <property type="match status" value="1"/>
</dbReference>
<dbReference type="InterPro" id="IPR023171">
    <property type="entry name" value="Na/H_antiporter_dom_sf"/>
</dbReference>
<dbReference type="InterPro" id="IPR004670">
    <property type="entry name" value="NhaA"/>
</dbReference>
<dbReference type="NCBIfam" id="TIGR00773">
    <property type="entry name" value="NhaA"/>
    <property type="match status" value="1"/>
</dbReference>
<dbReference type="PANTHER" id="PTHR30341:SF0">
    <property type="entry name" value="NA(+)_H(+) ANTIPORTER NHAA"/>
    <property type="match status" value="1"/>
</dbReference>
<dbReference type="PANTHER" id="PTHR30341">
    <property type="entry name" value="SODIUM ION/PROTON ANTIPORTER NHAA-RELATED"/>
    <property type="match status" value="1"/>
</dbReference>
<dbReference type="Pfam" id="PF06965">
    <property type="entry name" value="Na_H_antiport_1"/>
    <property type="match status" value="1"/>
</dbReference>